<name>GLGX_ENT38</name>
<keyword id="KW-0119">Carbohydrate metabolism</keyword>
<keyword id="KW-0321">Glycogen metabolism</keyword>
<keyword id="KW-0326">Glycosidase</keyword>
<keyword id="KW-0378">Hydrolase</keyword>
<accession>A4WFL4</accession>
<dbReference type="EC" id="3.2.1.196" evidence="1"/>
<dbReference type="EMBL" id="CP000653">
    <property type="protein sequence ID" value="ABP62494.1"/>
    <property type="molecule type" value="Genomic_DNA"/>
</dbReference>
<dbReference type="RefSeq" id="WP_015960799.1">
    <property type="nucleotide sequence ID" value="NC_009436.1"/>
</dbReference>
<dbReference type="SMR" id="A4WFL4"/>
<dbReference type="STRING" id="399742.Ent638_3839"/>
<dbReference type="CAZy" id="CBM48">
    <property type="family name" value="Carbohydrate-Binding Module Family 48"/>
</dbReference>
<dbReference type="CAZy" id="GH13">
    <property type="family name" value="Glycoside Hydrolase Family 13"/>
</dbReference>
<dbReference type="KEGG" id="ent:Ent638_3839"/>
<dbReference type="eggNOG" id="COG1523">
    <property type="taxonomic scope" value="Bacteria"/>
</dbReference>
<dbReference type="HOGENOM" id="CLU_011725_1_1_6"/>
<dbReference type="OrthoDB" id="3236218at2"/>
<dbReference type="UniPathway" id="UPA00165"/>
<dbReference type="Proteomes" id="UP000000230">
    <property type="component" value="Chromosome"/>
</dbReference>
<dbReference type="GO" id="GO:0004133">
    <property type="term" value="F:glycogen debranching enzyme activity"/>
    <property type="evidence" value="ECO:0007669"/>
    <property type="project" value="UniProtKB-UniRule"/>
</dbReference>
<dbReference type="GO" id="GO:0004553">
    <property type="term" value="F:hydrolase activity, hydrolyzing O-glycosyl compounds"/>
    <property type="evidence" value="ECO:0007669"/>
    <property type="project" value="InterPro"/>
</dbReference>
<dbReference type="GO" id="GO:0005980">
    <property type="term" value="P:glycogen catabolic process"/>
    <property type="evidence" value="ECO:0007669"/>
    <property type="project" value="UniProtKB-UniRule"/>
</dbReference>
<dbReference type="CDD" id="cd11326">
    <property type="entry name" value="AmyAc_Glg_debranch"/>
    <property type="match status" value="1"/>
</dbReference>
<dbReference type="CDD" id="cd02856">
    <property type="entry name" value="E_set_GDE_Isoamylase_N"/>
    <property type="match status" value="1"/>
</dbReference>
<dbReference type="Gene3D" id="3.20.20.80">
    <property type="entry name" value="Glycosidases"/>
    <property type="match status" value="1"/>
</dbReference>
<dbReference type="Gene3D" id="2.60.40.1180">
    <property type="entry name" value="Golgi alpha-mannosidase II"/>
    <property type="match status" value="1"/>
</dbReference>
<dbReference type="Gene3D" id="2.60.40.10">
    <property type="entry name" value="Immunoglobulins"/>
    <property type="match status" value="1"/>
</dbReference>
<dbReference type="HAMAP" id="MF_01248">
    <property type="entry name" value="GlgX"/>
    <property type="match status" value="1"/>
</dbReference>
<dbReference type="InterPro" id="IPR040784">
    <property type="entry name" value="GlgX_C"/>
</dbReference>
<dbReference type="InterPro" id="IPR044505">
    <property type="entry name" value="GlgX_Isoamylase_N_E_set"/>
</dbReference>
<dbReference type="InterPro" id="IPR006047">
    <property type="entry name" value="Glyco_hydro_13_cat_dom"/>
</dbReference>
<dbReference type="InterPro" id="IPR004193">
    <property type="entry name" value="Glyco_hydro_13_N"/>
</dbReference>
<dbReference type="InterPro" id="IPR013780">
    <property type="entry name" value="Glyco_hydro_b"/>
</dbReference>
<dbReference type="InterPro" id="IPR022844">
    <property type="entry name" value="Glycogen_debranch_bac"/>
</dbReference>
<dbReference type="InterPro" id="IPR011837">
    <property type="entry name" value="Glycogen_debranch_GlgX"/>
</dbReference>
<dbReference type="InterPro" id="IPR017853">
    <property type="entry name" value="Glycoside_hydrolase_SF"/>
</dbReference>
<dbReference type="InterPro" id="IPR013783">
    <property type="entry name" value="Ig-like_fold"/>
</dbReference>
<dbReference type="InterPro" id="IPR014756">
    <property type="entry name" value="Ig_E-set"/>
</dbReference>
<dbReference type="NCBIfam" id="TIGR02100">
    <property type="entry name" value="glgX_debranch"/>
    <property type="match status" value="1"/>
</dbReference>
<dbReference type="NCBIfam" id="NF002983">
    <property type="entry name" value="PRK03705.1"/>
    <property type="match status" value="1"/>
</dbReference>
<dbReference type="PANTHER" id="PTHR43002">
    <property type="entry name" value="GLYCOGEN DEBRANCHING ENZYME"/>
    <property type="match status" value="1"/>
</dbReference>
<dbReference type="Pfam" id="PF00128">
    <property type="entry name" value="Alpha-amylase"/>
    <property type="match status" value="1"/>
</dbReference>
<dbReference type="Pfam" id="PF02922">
    <property type="entry name" value="CBM_48"/>
    <property type="match status" value="1"/>
</dbReference>
<dbReference type="Pfam" id="PF18390">
    <property type="entry name" value="GlgX_C"/>
    <property type="match status" value="1"/>
</dbReference>
<dbReference type="SMART" id="SM00642">
    <property type="entry name" value="Aamy"/>
    <property type="match status" value="1"/>
</dbReference>
<dbReference type="SUPFAM" id="SSF51445">
    <property type="entry name" value="(Trans)glycosidases"/>
    <property type="match status" value="1"/>
</dbReference>
<dbReference type="SUPFAM" id="SSF81296">
    <property type="entry name" value="E set domains"/>
    <property type="match status" value="1"/>
</dbReference>
<comment type="function">
    <text evidence="1">Removes maltotriose and maltotetraose chains that are attached by 1,6-alpha-linkage to the limit dextrin main chain, generating a debranched limit dextrin.</text>
</comment>
<comment type="catalytic activity">
    <reaction evidence="1">
        <text>Hydrolysis of (1-&gt;6)-alpha-D-glucosidic linkages to branches with degrees of polymerization of three or four glucose residues in limit dextrin.</text>
        <dbReference type="EC" id="3.2.1.196"/>
    </reaction>
</comment>
<comment type="pathway">
    <text evidence="1">Glycan degradation; glycogen degradation.</text>
</comment>
<comment type="similarity">
    <text evidence="1">Belongs to the glycosyl hydrolase 13 family.</text>
</comment>
<protein>
    <recommendedName>
        <fullName evidence="1">Glycogen debranching enzyme</fullName>
        <ecNumber evidence="1">3.2.1.196</ecNumber>
    </recommendedName>
    <alternativeName>
        <fullName evidence="1">Limit dextrin alpha-1,6-maltotetraose-hydrolase</fullName>
    </alternativeName>
</protein>
<feature type="chain" id="PRO_1000165057" description="Glycogen debranching enzyme">
    <location>
        <begin position="1"/>
        <end position="657"/>
    </location>
</feature>
<feature type="region of interest" description="Disordered" evidence="2">
    <location>
        <begin position="460"/>
        <end position="479"/>
    </location>
</feature>
<feature type="active site" description="Nucleophile" evidence="1">
    <location>
        <position position="336"/>
    </location>
</feature>
<feature type="active site" description="Proton donor" evidence="1">
    <location>
        <position position="371"/>
    </location>
</feature>
<feature type="site" description="Transition state stabilizer" evidence="1">
    <location>
        <position position="443"/>
    </location>
</feature>
<organism>
    <name type="scientific">Enterobacter sp. (strain 638)</name>
    <dbReference type="NCBI Taxonomy" id="399742"/>
    <lineage>
        <taxon>Bacteria</taxon>
        <taxon>Pseudomonadati</taxon>
        <taxon>Pseudomonadota</taxon>
        <taxon>Gammaproteobacteria</taxon>
        <taxon>Enterobacterales</taxon>
        <taxon>Enterobacteriaceae</taxon>
        <taxon>Enterobacter</taxon>
    </lineage>
</organism>
<evidence type="ECO:0000255" key="1">
    <source>
        <dbReference type="HAMAP-Rule" id="MF_01248"/>
    </source>
</evidence>
<evidence type="ECO:0000256" key="2">
    <source>
        <dbReference type="SAM" id="MobiDB-lite"/>
    </source>
</evidence>
<proteinExistence type="inferred from homology"/>
<sequence length="657" mass="73784">MTQLTAGKPAPLGASFDGKGVNFTLFSAHAERVELCVFDREGNEYRYDLPAREGDIWHGYLEDGKPGLRYGFRVHGPWQPEYGLRFNPAKLLIDPCALRVDGDVKDDPLFLDGEQQPDPRDSAAIAPRSVVVSDVYDWEGDSSPDIPWGNTVIYEAHVKGLTYLHPAIPKEIRGTYKALGHPVMIAYLKHLGITSLELLPIWHFASEPRLQRLGLTNYWGYNPLAMFALDPRYASHPERARDEFRDAVKALHQAGIEVILDVVLNHSAELDLDGPTLSLRGIDNRSYYWIREDGDYHNWTGCGNTLNLSHPAVAEYAHACLKYWVETFHIDGFRFDLASVMGRTPAFSQQAPLLEAIKNCPVLSRVKLIAEPWDIGEGGYQVGNFPPPFAEWNDHYRDATRRFWLEKSLSLGEFAGRFSASSDVFKRQGRKPFSTVNLVTAHDGFTLRDCVCFNQKHNEANGEENRDGTNNNHSFNHGIEGLGGSQDVIERRRASVHALLTTLLLSQGTPMLLAGDEHGHSQHGNNNAYCQDNPLTWLDWEQANSGLTHFTAALIQLRQRIPALTADTWWEEGDGNVRWLNKDAQPLSAQEWQNGMPCLQILLSDNWLITFNATQDVVEIVLPDGEWRAIPPFAGEDNPVVVAVWHGPAHGVCVFQR</sequence>
<gene>
    <name evidence="1" type="primary">glgX</name>
    <name type="ordered locus">Ent638_3839</name>
</gene>
<reference key="1">
    <citation type="journal article" date="2010" name="PLoS Genet.">
        <title>Genome sequence of the plant growth promoting endophytic bacterium Enterobacter sp. 638.</title>
        <authorList>
            <person name="Taghavi S."/>
            <person name="van der Lelie D."/>
            <person name="Hoffman A."/>
            <person name="Zhang Y.B."/>
            <person name="Walla M.D."/>
            <person name="Vangronsveld J."/>
            <person name="Newman L."/>
            <person name="Monchy S."/>
        </authorList>
    </citation>
    <scope>NUCLEOTIDE SEQUENCE [LARGE SCALE GENOMIC DNA]</scope>
    <source>
        <strain>638</strain>
    </source>
</reference>